<proteinExistence type="inferred from homology"/>
<keyword id="KW-1185">Reference proteome</keyword>
<keyword id="KW-0677">Repeat</keyword>
<keyword id="KW-0964">Secreted</keyword>
<keyword id="KW-0732">Signal</keyword>
<accession>Q95196</accession>
<protein>
    <recommendedName>
        <fullName>Semenogelin-2</fullName>
    </recommendedName>
    <alternativeName>
        <fullName>Semenogelin II</fullName>
        <shortName>SGII</shortName>
    </alternativeName>
</protein>
<gene>
    <name type="primary">SEMG2</name>
</gene>
<feature type="signal peptide" evidence="2">
    <location>
        <begin position="1"/>
        <end position="23"/>
    </location>
</feature>
<feature type="chain" id="PRO_0000032363" description="Semenogelin-2">
    <location>
        <begin position="24"/>
        <end position="706"/>
    </location>
</feature>
<feature type="region of interest" description="Disordered" evidence="3">
    <location>
        <begin position="25"/>
        <end position="62"/>
    </location>
</feature>
<feature type="region of interest" description="Disordered" evidence="3">
    <location>
        <begin position="131"/>
        <end position="156"/>
    </location>
</feature>
<feature type="region of interest" description="Disordered" evidence="3">
    <location>
        <begin position="276"/>
        <end position="678"/>
    </location>
</feature>
<feature type="compositionally biased region" description="Basic and acidic residues" evidence="3">
    <location>
        <begin position="50"/>
        <end position="59"/>
    </location>
</feature>
<feature type="compositionally biased region" description="Polar residues" evidence="3">
    <location>
        <begin position="137"/>
        <end position="151"/>
    </location>
</feature>
<feature type="compositionally biased region" description="Basic and acidic residues" evidence="3">
    <location>
        <begin position="297"/>
        <end position="308"/>
    </location>
</feature>
<feature type="compositionally biased region" description="Polar residues" evidence="3">
    <location>
        <begin position="329"/>
        <end position="339"/>
    </location>
</feature>
<feature type="compositionally biased region" description="Basic and acidic residues" evidence="3">
    <location>
        <begin position="340"/>
        <end position="349"/>
    </location>
</feature>
<feature type="compositionally biased region" description="Polar residues" evidence="3">
    <location>
        <begin position="389"/>
        <end position="399"/>
    </location>
</feature>
<feature type="compositionally biased region" description="Basic and acidic residues" evidence="3">
    <location>
        <begin position="400"/>
        <end position="409"/>
    </location>
</feature>
<feature type="compositionally biased region" description="Polar residues" evidence="3">
    <location>
        <begin position="449"/>
        <end position="459"/>
    </location>
</feature>
<feature type="compositionally biased region" description="Basic and acidic residues" evidence="3">
    <location>
        <begin position="460"/>
        <end position="469"/>
    </location>
</feature>
<feature type="compositionally biased region" description="Polar residues" evidence="3">
    <location>
        <begin position="509"/>
        <end position="519"/>
    </location>
</feature>
<feature type="compositionally biased region" description="Basic and acidic residues" evidence="3">
    <location>
        <begin position="520"/>
        <end position="529"/>
    </location>
</feature>
<feature type="compositionally biased region" description="Polar residues" evidence="3">
    <location>
        <begin position="569"/>
        <end position="579"/>
    </location>
</feature>
<feature type="compositionally biased region" description="Basic and acidic residues" evidence="3">
    <location>
        <begin position="580"/>
        <end position="589"/>
    </location>
</feature>
<feature type="compositionally biased region" description="Polar residues" evidence="3">
    <location>
        <begin position="611"/>
        <end position="622"/>
    </location>
</feature>
<feature type="compositionally biased region" description="Polar residues" evidence="3">
    <location>
        <begin position="630"/>
        <end position="653"/>
    </location>
</feature>
<feature type="compositionally biased region" description="Basic and acidic residues" evidence="3">
    <location>
        <begin position="654"/>
        <end position="670"/>
    </location>
</feature>
<evidence type="ECO:0000250" key="1"/>
<evidence type="ECO:0000255" key="2"/>
<evidence type="ECO:0000256" key="3">
    <source>
        <dbReference type="SAM" id="MobiDB-lite"/>
    </source>
</evidence>
<evidence type="ECO:0000305" key="4"/>
<name>SEMG2_MACMU</name>
<reference key="1">
    <citation type="journal article" date="1997" name="Eur. J. Biochem.">
        <title>Cloning of the semenogelin II gene of the rhesus monkey. Duplications of 360 bp extend the coding region in man, rhesus monkey and baboon.</title>
        <authorList>
            <person name="Ulvsbaeck M."/>
            <person name="Lundwall A."/>
        </authorList>
    </citation>
    <scope>NUCLEOTIDE SEQUENCE [GENOMIC DNA]</scope>
</reference>
<comment type="function">
    <text>Participates in the formation of a gel matrix (sperm coagulum) entrapping the accessory gland secretions and ejaculated spermatozoa.</text>
</comment>
<comment type="subunit">
    <text evidence="1">Interacts with SERPINA5.</text>
</comment>
<comment type="subcellular location">
    <subcellularLocation>
        <location>Secreted</location>
    </subcellularLocation>
</comment>
<comment type="similarity">
    <text evidence="4">Belongs to the semenogelin family.</text>
</comment>
<dbReference type="EMBL" id="X92589">
    <property type="protein sequence ID" value="CAA63333.1"/>
    <property type="molecule type" value="Genomic_DNA"/>
</dbReference>
<dbReference type="FunCoup" id="Q95196">
    <property type="interactions" value="189"/>
</dbReference>
<dbReference type="STRING" id="9544.ENSMMUP00000023119"/>
<dbReference type="PaxDb" id="9544-ENSMMUP00000023119"/>
<dbReference type="eggNOG" id="ENOG502T80H">
    <property type="taxonomic scope" value="Eukaryota"/>
</dbReference>
<dbReference type="InParanoid" id="Q95196"/>
<dbReference type="Proteomes" id="UP000006718">
    <property type="component" value="Unassembled WGS sequence"/>
</dbReference>
<dbReference type="GO" id="GO:0005576">
    <property type="term" value="C:extracellular region"/>
    <property type="evidence" value="ECO:0007669"/>
    <property type="project" value="UniProtKB-SubCell"/>
</dbReference>
<dbReference type="GO" id="GO:0050817">
    <property type="term" value="P:coagulation"/>
    <property type="evidence" value="ECO:0007669"/>
    <property type="project" value="InterPro"/>
</dbReference>
<dbReference type="GO" id="GO:1901318">
    <property type="term" value="P:negative regulation of flagellated sperm motility"/>
    <property type="evidence" value="ECO:0007669"/>
    <property type="project" value="InterPro"/>
</dbReference>
<dbReference type="GO" id="GO:0048240">
    <property type="term" value="P:sperm capacitation"/>
    <property type="evidence" value="ECO:0000318"/>
    <property type="project" value="GO_Central"/>
</dbReference>
<dbReference type="InterPro" id="IPR008836">
    <property type="entry name" value="Semenogelin"/>
</dbReference>
<dbReference type="PANTHER" id="PTHR10547:SF6">
    <property type="entry name" value="SEMENOGELIN-2"/>
    <property type="match status" value="1"/>
</dbReference>
<dbReference type="PANTHER" id="PTHR10547">
    <property type="entry name" value="SEMENOGELIN/SEMINAL VESICLE SECRETORY PROTEIN"/>
    <property type="match status" value="1"/>
</dbReference>
<dbReference type="Pfam" id="PF05474">
    <property type="entry name" value="Semenogelin"/>
    <property type="match status" value="2"/>
</dbReference>
<sequence>MKSIILFVLSLLLILEKQAAVMGQKGGSKGQLSSGSSRFPHRHRSQHYSGQKDKQHTESKGSFSIQHTYHVDANDHDRTRKSQQYYLNAQHKTTKSKQHLRRRQRLLNYKQKGRGRVKPKRHFHLIVIHRKGGQVHHGTQNPSQDQGNSPSGKGIFRQYSNTEERLWFRGLSKEQASASGAQKGRTQGGSQTNYVLQTEELVANKQQNKQQRETQNSHRNKGHYQNVFEVREEHSSKLQTSLHPAHQHRLQHGYKDIFTTQNELLVYNKNQHQTKNLNQDQEHGQKAHKGSYQSSSTEERQPNHEENSVQKGVPKGSISIQTEEKIYGKSQNQVTIPSQDQEHGHKENKISYQSSSAEERRLNSGEKGIQKGVPKGSISIQTEEKIYGKSQNQVTIPSQDQEHGHKENKISYQSSSAEERRLNSGEKGIQKGVPKGSISIQTEEKIYGKSQNQVTIPSQDQEHGHKENKISYQSSSTEERRLNSGEKGIQRGVSKGSISIQTEEKIHGKSQNQVAIPSQDQEHGHKENKISYQSSSAEERQLNSGEKGIQKGVSKGSISIQTEEKIYGKSQNQVTIPSQDQEHGHKENKIAYQSSSTEERQLNYGGKSIQKDVSQSSLSFQTEKLVEGKSQIQTPNPNQGQWSGQNAKGNSGKSADREQDLLSHEQEGRYQQEFSGAHNTVNIEHEVAYDDLLTQQYNEDRNPVST</sequence>
<organism>
    <name type="scientific">Macaca mulatta</name>
    <name type="common">Rhesus macaque</name>
    <dbReference type="NCBI Taxonomy" id="9544"/>
    <lineage>
        <taxon>Eukaryota</taxon>
        <taxon>Metazoa</taxon>
        <taxon>Chordata</taxon>
        <taxon>Craniata</taxon>
        <taxon>Vertebrata</taxon>
        <taxon>Euteleostomi</taxon>
        <taxon>Mammalia</taxon>
        <taxon>Eutheria</taxon>
        <taxon>Euarchontoglires</taxon>
        <taxon>Primates</taxon>
        <taxon>Haplorrhini</taxon>
        <taxon>Catarrhini</taxon>
        <taxon>Cercopithecidae</taxon>
        <taxon>Cercopithecinae</taxon>
        <taxon>Macaca</taxon>
    </lineage>
</organism>